<sequence>MSVKIFNSLTKQKEIFKPIESGKVKLYVCGMTVYDYMHIGHGRSWIIFDMVVRYLRMRGYEVTFVRNITDIDDKIIKRAGENKESPAALAERFIQILHEDEKALRVLSPDQEPRATQYVPEIIKLIQKLLDNQYAYTGQNGDVFFDVRRFKDYGKLSHRHLDELQAGARVEVSDSKRDPLDFVLWKKAKPGEPKWDSPWGEGRPGWHIECSAMSSSILGQPFDIHGGGLDLKFPHHENEIAQSEAGEEKPFVKLWMHAGLLEINKEKMSKSLGNIISIREALKESDVEVLRYFLLSGHYRNPLSYSKENLENGRLALERFYLALRGLPVVNHEKTSSYTDRFYEAMDDDFNTPIAFALLFEMVREINRFRDNNQIEKAAVLAAELKCLGNIFGLLQYSPEQFLQGAKKEADVQEIKKLIDQRNEARAKKDWKTADQIRDQLTDLGVAIEDSSDGTSWRQE</sequence>
<keyword id="KW-0002">3D-structure</keyword>
<keyword id="KW-0030">Aminoacyl-tRNA synthetase</keyword>
<keyword id="KW-0067">ATP-binding</keyword>
<keyword id="KW-0963">Cytoplasm</keyword>
<keyword id="KW-0436">Ligase</keyword>
<keyword id="KW-0479">Metal-binding</keyword>
<keyword id="KW-0547">Nucleotide-binding</keyword>
<keyword id="KW-0648">Protein biosynthesis</keyword>
<keyword id="KW-1185">Reference proteome</keyword>
<keyword id="KW-0862">Zinc</keyword>
<protein>
    <recommendedName>
        <fullName evidence="1">Cysteine--tRNA ligase</fullName>
        <ecNumber evidence="1">6.1.1.16</ecNumber>
    </recommendedName>
    <alternativeName>
        <fullName evidence="1">Cysteinyl-tRNA synthetase</fullName>
        <shortName evidence="1">CysRS</shortName>
    </alternativeName>
</protein>
<reference key="1">
    <citation type="journal article" date="2003" name="Proc. Natl. Acad. Sci. U.S.A.">
        <title>Complete genome sequence of the Q-fever pathogen, Coxiella burnetii.</title>
        <authorList>
            <person name="Seshadri R."/>
            <person name="Paulsen I.T."/>
            <person name="Eisen J.A."/>
            <person name="Read T.D."/>
            <person name="Nelson K.E."/>
            <person name="Nelson W.C."/>
            <person name="Ward N.L."/>
            <person name="Tettelin H."/>
            <person name="Davidsen T.M."/>
            <person name="Beanan M.J."/>
            <person name="DeBoy R.T."/>
            <person name="Daugherty S.C."/>
            <person name="Brinkac L.M."/>
            <person name="Madupu R."/>
            <person name="Dodson R.J."/>
            <person name="Khouri H.M."/>
            <person name="Lee K.H."/>
            <person name="Carty H.A."/>
            <person name="Scanlan D."/>
            <person name="Heinzen R.A."/>
            <person name="Thompson H.A."/>
            <person name="Samuel J.E."/>
            <person name="Fraser C.M."/>
            <person name="Heidelberg J.F."/>
        </authorList>
    </citation>
    <scope>NUCLEOTIDE SEQUENCE [LARGE SCALE GENOMIC DNA]</scope>
    <source>
        <strain>RSA 493 / Nine Mile phase I</strain>
    </source>
</reference>
<feature type="chain" id="PRO_0000159390" description="Cysteine--tRNA ligase">
    <location>
        <begin position="1"/>
        <end position="460"/>
    </location>
</feature>
<feature type="short sequence motif" description="'HIGH' region">
    <location>
        <begin position="31"/>
        <end position="41"/>
    </location>
</feature>
<feature type="short sequence motif" description="'KMSKS' region">
    <location>
        <begin position="267"/>
        <end position="271"/>
    </location>
</feature>
<feature type="binding site" evidence="1">
    <location>
        <position position="29"/>
    </location>
    <ligand>
        <name>Zn(2+)</name>
        <dbReference type="ChEBI" id="CHEBI:29105"/>
    </ligand>
</feature>
<feature type="binding site" evidence="1">
    <location>
        <position position="210"/>
    </location>
    <ligand>
        <name>Zn(2+)</name>
        <dbReference type="ChEBI" id="CHEBI:29105"/>
    </ligand>
</feature>
<feature type="binding site" evidence="1">
    <location>
        <position position="235"/>
    </location>
    <ligand>
        <name>Zn(2+)</name>
        <dbReference type="ChEBI" id="CHEBI:29105"/>
    </ligand>
</feature>
<feature type="binding site" evidence="1">
    <location>
        <position position="239"/>
    </location>
    <ligand>
        <name>Zn(2+)</name>
        <dbReference type="ChEBI" id="CHEBI:29105"/>
    </ligand>
</feature>
<feature type="binding site" evidence="1">
    <location>
        <position position="270"/>
    </location>
    <ligand>
        <name>ATP</name>
        <dbReference type="ChEBI" id="CHEBI:30616"/>
    </ligand>
</feature>
<feature type="strand" evidence="2">
    <location>
        <begin position="4"/>
        <end position="7"/>
    </location>
</feature>
<feature type="turn" evidence="2">
    <location>
        <begin position="8"/>
        <end position="11"/>
    </location>
</feature>
<feature type="strand" evidence="2">
    <location>
        <begin position="12"/>
        <end position="15"/>
    </location>
</feature>
<feature type="strand" evidence="2">
    <location>
        <begin position="23"/>
        <end position="28"/>
    </location>
</feature>
<feature type="helix" evidence="2">
    <location>
        <begin position="39"/>
        <end position="57"/>
    </location>
</feature>
<feature type="strand" evidence="2">
    <location>
        <begin position="61"/>
        <end position="66"/>
    </location>
</feature>
<feature type="helix" evidence="2">
    <location>
        <begin position="73"/>
        <end position="81"/>
    </location>
</feature>
<feature type="helix" evidence="2">
    <location>
        <begin position="86"/>
        <end position="104"/>
    </location>
</feature>
<feature type="helix" evidence="2">
    <location>
        <begin position="115"/>
        <end position="117"/>
    </location>
</feature>
<feature type="helix" evidence="2">
    <location>
        <begin position="119"/>
        <end position="131"/>
    </location>
</feature>
<feature type="strand" evidence="2">
    <location>
        <begin position="134"/>
        <end position="137"/>
    </location>
</feature>
<feature type="strand" evidence="2">
    <location>
        <begin position="143"/>
        <end position="145"/>
    </location>
</feature>
<feature type="turn" evidence="2">
    <location>
        <begin position="147"/>
        <end position="149"/>
    </location>
</feature>
<feature type="turn" evidence="2">
    <location>
        <begin position="151"/>
        <end position="158"/>
    </location>
</feature>
<feature type="strand" evidence="2">
    <location>
        <begin position="182"/>
        <end position="187"/>
    </location>
</feature>
<feature type="strand" evidence="2">
    <location>
        <begin position="201"/>
        <end position="204"/>
    </location>
</feature>
<feature type="helix" evidence="2">
    <location>
        <begin position="206"/>
        <end position="218"/>
    </location>
</feature>
<feature type="strand" evidence="2">
    <location>
        <begin position="220"/>
        <end position="228"/>
    </location>
</feature>
<feature type="helix" evidence="2">
    <location>
        <begin position="229"/>
        <end position="231"/>
    </location>
</feature>
<feature type="turn" evidence="2">
    <location>
        <begin position="232"/>
        <end position="234"/>
    </location>
</feature>
<feature type="helix" evidence="2">
    <location>
        <begin position="235"/>
        <end position="247"/>
    </location>
</feature>
<feature type="strand" evidence="2">
    <location>
        <begin position="252"/>
        <end position="258"/>
    </location>
</feature>
<feature type="strand" evidence="2">
    <location>
        <begin position="261"/>
        <end position="263"/>
    </location>
</feature>
<feature type="turn" evidence="2">
    <location>
        <begin position="270"/>
        <end position="273"/>
    </location>
</feature>
<feature type="helix" evidence="2">
    <location>
        <begin position="278"/>
        <end position="284"/>
    </location>
</feature>
<feature type="helix" evidence="2">
    <location>
        <begin position="287"/>
        <end position="296"/>
    </location>
</feature>
<feature type="strand" evidence="2">
    <location>
        <begin position="303"/>
        <end position="305"/>
    </location>
</feature>
<feature type="helix" evidence="2">
    <location>
        <begin position="307"/>
        <end position="324"/>
    </location>
</feature>
<feature type="helix" evidence="2">
    <location>
        <begin position="337"/>
        <end position="346"/>
    </location>
</feature>
<feature type="helix" evidence="2">
    <location>
        <begin position="352"/>
        <end position="371"/>
    </location>
</feature>
<feature type="helix" evidence="2">
    <location>
        <begin position="375"/>
        <end position="389"/>
    </location>
</feature>
<feature type="helix" evidence="2">
    <location>
        <begin position="390"/>
        <end position="392"/>
    </location>
</feature>
<feature type="helix" evidence="2">
    <location>
        <begin position="399"/>
        <end position="402"/>
    </location>
</feature>
<organism>
    <name type="scientific">Coxiella burnetii (strain RSA 493 / Nine Mile phase I)</name>
    <dbReference type="NCBI Taxonomy" id="227377"/>
    <lineage>
        <taxon>Bacteria</taxon>
        <taxon>Pseudomonadati</taxon>
        <taxon>Pseudomonadota</taxon>
        <taxon>Gammaproteobacteria</taxon>
        <taxon>Legionellales</taxon>
        <taxon>Coxiellaceae</taxon>
        <taxon>Coxiella</taxon>
    </lineage>
</organism>
<dbReference type="EC" id="6.1.1.16" evidence="1"/>
<dbReference type="EMBL" id="AE016828">
    <property type="protein sequence ID" value="AAO90984.2"/>
    <property type="molecule type" value="Genomic_DNA"/>
</dbReference>
<dbReference type="RefSeq" id="NP_820470.2">
    <property type="nucleotide sequence ID" value="NC_002971.4"/>
</dbReference>
<dbReference type="RefSeq" id="WP_010958260.1">
    <property type="nucleotide sequence ID" value="NZ_CDBG01000001.1"/>
</dbReference>
<dbReference type="PDB" id="3TQO">
    <property type="method" value="X-ray"/>
    <property type="resolution" value="2.30 A"/>
    <property type="chains" value="A=1-460"/>
</dbReference>
<dbReference type="PDBsum" id="3TQO"/>
<dbReference type="SMR" id="Q83BL7"/>
<dbReference type="STRING" id="227377.CBU_1487"/>
<dbReference type="DNASU" id="1209397"/>
<dbReference type="EnsemblBacteria" id="AAO90984">
    <property type="protein sequence ID" value="AAO90984"/>
    <property type="gene ID" value="CBU_1487"/>
</dbReference>
<dbReference type="GeneID" id="1209397"/>
<dbReference type="KEGG" id="cbu:CBU_1487"/>
<dbReference type="PATRIC" id="fig|227377.7.peg.1488"/>
<dbReference type="eggNOG" id="COG0215">
    <property type="taxonomic scope" value="Bacteria"/>
</dbReference>
<dbReference type="HOGENOM" id="CLU_013528_0_1_6"/>
<dbReference type="OrthoDB" id="9815130at2"/>
<dbReference type="EvolutionaryTrace" id="Q83BL7"/>
<dbReference type="Proteomes" id="UP000002671">
    <property type="component" value="Chromosome"/>
</dbReference>
<dbReference type="GO" id="GO:0005737">
    <property type="term" value="C:cytoplasm"/>
    <property type="evidence" value="ECO:0000318"/>
    <property type="project" value="GO_Central"/>
</dbReference>
<dbReference type="GO" id="GO:0005829">
    <property type="term" value="C:cytosol"/>
    <property type="evidence" value="ECO:0000318"/>
    <property type="project" value="GO_Central"/>
</dbReference>
<dbReference type="GO" id="GO:0005524">
    <property type="term" value="F:ATP binding"/>
    <property type="evidence" value="ECO:0000318"/>
    <property type="project" value="GO_Central"/>
</dbReference>
<dbReference type="GO" id="GO:0004817">
    <property type="term" value="F:cysteine-tRNA ligase activity"/>
    <property type="evidence" value="ECO:0000318"/>
    <property type="project" value="GO_Central"/>
</dbReference>
<dbReference type="GO" id="GO:0008270">
    <property type="term" value="F:zinc ion binding"/>
    <property type="evidence" value="ECO:0007669"/>
    <property type="project" value="UniProtKB-UniRule"/>
</dbReference>
<dbReference type="GO" id="GO:0006423">
    <property type="term" value="P:cysteinyl-tRNA aminoacylation"/>
    <property type="evidence" value="ECO:0000318"/>
    <property type="project" value="GO_Central"/>
</dbReference>
<dbReference type="CDD" id="cd07963">
    <property type="entry name" value="Anticodon_Ia_Cys"/>
    <property type="match status" value="1"/>
</dbReference>
<dbReference type="CDD" id="cd00672">
    <property type="entry name" value="CysRS_core"/>
    <property type="match status" value="1"/>
</dbReference>
<dbReference type="FunFam" id="3.40.50.620:FF:000009">
    <property type="entry name" value="Cysteine--tRNA ligase"/>
    <property type="match status" value="1"/>
</dbReference>
<dbReference type="Gene3D" id="1.20.120.1910">
    <property type="entry name" value="Cysteine-tRNA ligase, C-terminal anti-codon recognition domain"/>
    <property type="match status" value="1"/>
</dbReference>
<dbReference type="Gene3D" id="3.40.50.620">
    <property type="entry name" value="HUPs"/>
    <property type="match status" value="1"/>
</dbReference>
<dbReference type="HAMAP" id="MF_00041">
    <property type="entry name" value="Cys_tRNA_synth"/>
    <property type="match status" value="1"/>
</dbReference>
<dbReference type="InterPro" id="IPR015803">
    <property type="entry name" value="Cys-tRNA-ligase"/>
</dbReference>
<dbReference type="InterPro" id="IPR015273">
    <property type="entry name" value="Cys-tRNA-synt_Ia_DALR"/>
</dbReference>
<dbReference type="InterPro" id="IPR024909">
    <property type="entry name" value="Cys-tRNA/MSH_ligase"/>
</dbReference>
<dbReference type="InterPro" id="IPR056411">
    <property type="entry name" value="CysS_C"/>
</dbReference>
<dbReference type="InterPro" id="IPR014729">
    <property type="entry name" value="Rossmann-like_a/b/a_fold"/>
</dbReference>
<dbReference type="InterPro" id="IPR032678">
    <property type="entry name" value="tRNA-synt_1_cat_dom"/>
</dbReference>
<dbReference type="InterPro" id="IPR009080">
    <property type="entry name" value="tRNAsynth_Ia_anticodon-bd"/>
</dbReference>
<dbReference type="NCBIfam" id="TIGR00435">
    <property type="entry name" value="cysS"/>
    <property type="match status" value="1"/>
</dbReference>
<dbReference type="PANTHER" id="PTHR10890:SF3">
    <property type="entry name" value="CYSTEINE--TRNA LIGASE, CYTOPLASMIC"/>
    <property type="match status" value="1"/>
</dbReference>
<dbReference type="PANTHER" id="PTHR10890">
    <property type="entry name" value="CYSTEINYL-TRNA SYNTHETASE"/>
    <property type="match status" value="1"/>
</dbReference>
<dbReference type="Pfam" id="PF23493">
    <property type="entry name" value="CysS_C"/>
    <property type="match status" value="1"/>
</dbReference>
<dbReference type="Pfam" id="PF09190">
    <property type="entry name" value="DALR_2"/>
    <property type="match status" value="1"/>
</dbReference>
<dbReference type="Pfam" id="PF01406">
    <property type="entry name" value="tRNA-synt_1e"/>
    <property type="match status" value="1"/>
</dbReference>
<dbReference type="PRINTS" id="PR00983">
    <property type="entry name" value="TRNASYNTHCYS"/>
</dbReference>
<dbReference type="SMART" id="SM00840">
    <property type="entry name" value="DALR_2"/>
    <property type="match status" value="1"/>
</dbReference>
<dbReference type="SUPFAM" id="SSF47323">
    <property type="entry name" value="Anticodon-binding domain of a subclass of class I aminoacyl-tRNA synthetases"/>
    <property type="match status" value="1"/>
</dbReference>
<dbReference type="SUPFAM" id="SSF52374">
    <property type="entry name" value="Nucleotidylyl transferase"/>
    <property type="match status" value="1"/>
</dbReference>
<accession>Q83BL7</accession>
<name>SYC_COXBU</name>
<evidence type="ECO:0000255" key="1">
    <source>
        <dbReference type="HAMAP-Rule" id="MF_00041"/>
    </source>
</evidence>
<evidence type="ECO:0007829" key="2">
    <source>
        <dbReference type="PDB" id="3TQO"/>
    </source>
</evidence>
<comment type="catalytic activity">
    <reaction evidence="1">
        <text>tRNA(Cys) + L-cysteine + ATP = L-cysteinyl-tRNA(Cys) + AMP + diphosphate</text>
        <dbReference type="Rhea" id="RHEA:17773"/>
        <dbReference type="Rhea" id="RHEA-COMP:9661"/>
        <dbReference type="Rhea" id="RHEA-COMP:9679"/>
        <dbReference type="ChEBI" id="CHEBI:30616"/>
        <dbReference type="ChEBI" id="CHEBI:33019"/>
        <dbReference type="ChEBI" id="CHEBI:35235"/>
        <dbReference type="ChEBI" id="CHEBI:78442"/>
        <dbReference type="ChEBI" id="CHEBI:78517"/>
        <dbReference type="ChEBI" id="CHEBI:456215"/>
        <dbReference type="EC" id="6.1.1.16"/>
    </reaction>
</comment>
<comment type="cofactor">
    <cofactor evidence="1">
        <name>Zn(2+)</name>
        <dbReference type="ChEBI" id="CHEBI:29105"/>
    </cofactor>
    <text evidence="1">Binds 1 zinc ion per subunit.</text>
</comment>
<comment type="subunit">
    <text evidence="1">Monomer.</text>
</comment>
<comment type="subcellular location">
    <subcellularLocation>
        <location evidence="1">Cytoplasm</location>
    </subcellularLocation>
</comment>
<comment type="similarity">
    <text evidence="1">Belongs to the class-I aminoacyl-tRNA synthetase family.</text>
</comment>
<gene>
    <name evidence="1" type="primary">cysS</name>
    <name type="ordered locus">CBU_1487</name>
</gene>
<proteinExistence type="evidence at protein level"/>